<dbReference type="EMBL" id="CP000546">
    <property type="protein sequence ID" value="ABN02902.1"/>
    <property type="molecule type" value="Genomic_DNA"/>
</dbReference>
<dbReference type="RefSeq" id="WP_004533998.1">
    <property type="nucleotide sequence ID" value="NC_008836.1"/>
</dbReference>
<dbReference type="SMR" id="A2S994"/>
<dbReference type="KEGG" id="bml:BMA10229_A2555"/>
<dbReference type="HOGENOM" id="CLU_049215_2_1_4"/>
<dbReference type="Proteomes" id="UP000002283">
    <property type="component" value="Chromosome I"/>
</dbReference>
<dbReference type="GO" id="GO:0005737">
    <property type="term" value="C:cytoplasm"/>
    <property type="evidence" value="ECO:0007669"/>
    <property type="project" value="UniProtKB-SubCell"/>
</dbReference>
<dbReference type="GO" id="GO:0016151">
    <property type="term" value="F:nickel cation binding"/>
    <property type="evidence" value="ECO:0007669"/>
    <property type="project" value="UniProtKB-UniRule"/>
</dbReference>
<dbReference type="Gene3D" id="1.10.4190.10">
    <property type="entry name" value="Urease accessory protein UreF"/>
    <property type="match status" value="1"/>
</dbReference>
<dbReference type="HAMAP" id="MF_01385">
    <property type="entry name" value="UreF"/>
    <property type="match status" value="1"/>
</dbReference>
<dbReference type="InterPro" id="IPR002639">
    <property type="entry name" value="UreF"/>
</dbReference>
<dbReference type="InterPro" id="IPR038277">
    <property type="entry name" value="UreF_sf"/>
</dbReference>
<dbReference type="PANTHER" id="PTHR33620">
    <property type="entry name" value="UREASE ACCESSORY PROTEIN F"/>
    <property type="match status" value="1"/>
</dbReference>
<dbReference type="PANTHER" id="PTHR33620:SF1">
    <property type="entry name" value="UREASE ACCESSORY PROTEIN F"/>
    <property type="match status" value="1"/>
</dbReference>
<dbReference type="Pfam" id="PF01730">
    <property type="entry name" value="UreF"/>
    <property type="match status" value="1"/>
</dbReference>
<dbReference type="PIRSF" id="PIRSF009467">
    <property type="entry name" value="Ureas_acces_UreF"/>
    <property type="match status" value="1"/>
</dbReference>
<organism>
    <name type="scientific">Burkholderia mallei (strain NCTC 10229)</name>
    <dbReference type="NCBI Taxonomy" id="412022"/>
    <lineage>
        <taxon>Bacteria</taxon>
        <taxon>Pseudomonadati</taxon>
        <taxon>Pseudomonadota</taxon>
        <taxon>Betaproteobacteria</taxon>
        <taxon>Burkholderiales</taxon>
        <taxon>Burkholderiaceae</taxon>
        <taxon>Burkholderia</taxon>
        <taxon>pseudomallei group</taxon>
    </lineage>
</organism>
<protein>
    <recommendedName>
        <fullName evidence="1">Urease accessory protein UreF</fullName>
    </recommendedName>
</protein>
<sequence length="226" mass="23958">MDTAELVALLHLASPALPIGAFSYSQGLEAALDAPLIRDADGARDWIASGLADVLAQGELPFLAHQLARWHAHDAAALADANDEFVASRESFELRRETEQMGWSLAQLCASLEWGDAARRATLASIPSVALPSAFAFAAAAHGATPDAALAAYAFGWVENQTAAAIKAVPLGQLAGQKIIVALREPIRDAVRRALATPPEAINTFAPQLGILSARHESQYSRLFRS</sequence>
<gene>
    <name evidence="1" type="primary">ureF</name>
    <name type="ordered locus">BMA10229_A2555</name>
</gene>
<accession>A2S994</accession>
<feature type="chain" id="PRO_1000145110" description="Urease accessory protein UreF">
    <location>
        <begin position="1"/>
        <end position="226"/>
    </location>
</feature>
<name>UREF_BURM9</name>
<proteinExistence type="inferred from homology"/>
<keyword id="KW-0143">Chaperone</keyword>
<keyword id="KW-0963">Cytoplasm</keyword>
<keyword id="KW-0996">Nickel insertion</keyword>
<comment type="function">
    <text evidence="1">Required for maturation of urease via the functional incorporation of the urease nickel metallocenter.</text>
</comment>
<comment type="subunit">
    <text evidence="1">UreD, UreF and UreG form a complex that acts as a GTP-hydrolysis-dependent molecular chaperone, activating the urease apoprotein by helping to assemble the nickel containing metallocenter of UreC. The UreE protein probably delivers the nickel.</text>
</comment>
<comment type="subcellular location">
    <subcellularLocation>
        <location evidence="1">Cytoplasm</location>
    </subcellularLocation>
</comment>
<comment type="similarity">
    <text evidence="1">Belongs to the UreF family.</text>
</comment>
<evidence type="ECO:0000255" key="1">
    <source>
        <dbReference type="HAMAP-Rule" id="MF_01385"/>
    </source>
</evidence>
<reference key="1">
    <citation type="journal article" date="2010" name="Genome Biol. Evol.">
        <title>Continuing evolution of Burkholderia mallei through genome reduction and large-scale rearrangements.</title>
        <authorList>
            <person name="Losada L."/>
            <person name="Ronning C.M."/>
            <person name="DeShazer D."/>
            <person name="Woods D."/>
            <person name="Fedorova N."/>
            <person name="Kim H.S."/>
            <person name="Shabalina S.A."/>
            <person name="Pearson T.R."/>
            <person name="Brinkac L."/>
            <person name="Tan P."/>
            <person name="Nandi T."/>
            <person name="Crabtree J."/>
            <person name="Badger J."/>
            <person name="Beckstrom-Sternberg S."/>
            <person name="Saqib M."/>
            <person name="Schutzer S.E."/>
            <person name="Keim P."/>
            <person name="Nierman W.C."/>
        </authorList>
    </citation>
    <scope>NUCLEOTIDE SEQUENCE [LARGE SCALE GENOMIC DNA]</scope>
    <source>
        <strain>NCTC 10229</strain>
    </source>
</reference>